<comment type="subcellular location">
    <subcellularLocation>
        <location evidence="2">Cell membrane</location>
        <topology evidence="2">Multi-pass membrane protein</topology>
    </subcellularLocation>
</comment>
<gene>
    <name type="ordered locus">MG320</name>
</gene>
<protein>
    <recommendedName>
        <fullName>Uncharacterized protein MG320</fullName>
    </recommendedName>
</protein>
<name>Y320_MYCGE</name>
<proteinExistence type="predicted"/>
<reference key="1">
    <citation type="journal article" date="1995" name="Science">
        <title>The minimal gene complement of Mycoplasma genitalium.</title>
        <authorList>
            <person name="Fraser C.M."/>
            <person name="Gocayne J.D."/>
            <person name="White O."/>
            <person name="Adams M.D."/>
            <person name="Clayton R.A."/>
            <person name="Fleischmann R.D."/>
            <person name="Bult C.J."/>
            <person name="Kerlavage A.R."/>
            <person name="Sutton G.G."/>
            <person name="Kelley J.M."/>
            <person name="Fritchman J.L."/>
            <person name="Weidman J.F."/>
            <person name="Small K.V."/>
            <person name="Sandusky M."/>
            <person name="Fuhrmann J.L."/>
            <person name="Nguyen D.T."/>
            <person name="Utterback T.R."/>
            <person name="Saudek D.M."/>
            <person name="Phillips C.A."/>
            <person name="Merrick J.M."/>
            <person name="Tomb J.-F."/>
            <person name="Dougherty B.A."/>
            <person name="Bott K.F."/>
            <person name="Hu P.-C."/>
            <person name="Lucier T.S."/>
            <person name="Peterson S.N."/>
            <person name="Smith H.O."/>
            <person name="Hutchison C.A. III"/>
            <person name="Venter J.C."/>
        </authorList>
    </citation>
    <scope>NUCLEOTIDE SEQUENCE [LARGE SCALE GENOMIC DNA]</scope>
    <source>
        <strain>ATCC 33530 / DSM 19775 / NCTC 10195 / G37</strain>
    </source>
</reference>
<reference key="2">
    <citation type="journal article" date="1993" name="J. Bacteriol.">
        <title>A survey of the Mycoplasma genitalium genome by using random sequencing.</title>
        <authorList>
            <person name="Peterson S.N."/>
            <person name="Hu P.-C."/>
            <person name="Bott K.F."/>
            <person name="Hutchison C.A. III"/>
        </authorList>
    </citation>
    <scope>NUCLEOTIDE SEQUENCE [GENOMIC DNA] OF 125-260</scope>
    <source>
        <strain>ATCC 33530 / DSM 19775 / NCTC 10195 / G37</strain>
    </source>
</reference>
<dbReference type="EMBL" id="L43967">
    <property type="protein sequence ID" value="AAC71542.1"/>
    <property type="molecule type" value="Genomic_DNA"/>
</dbReference>
<dbReference type="EMBL" id="U01700">
    <property type="protein sequence ID" value="AAB01012.1"/>
    <property type="molecule type" value="Genomic_DNA"/>
</dbReference>
<dbReference type="PIR" id="D64235">
    <property type="entry name" value="D64235"/>
</dbReference>
<dbReference type="RefSeq" id="WP_010869429.1">
    <property type="nucleotide sequence ID" value="NC_000908.2"/>
</dbReference>
<dbReference type="STRING" id="243273.MG_320"/>
<dbReference type="GeneID" id="88282483"/>
<dbReference type="KEGG" id="mge:MG_320"/>
<dbReference type="eggNOG" id="ENOG5032G6X">
    <property type="taxonomic scope" value="Bacteria"/>
</dbReference>
<dbReference type="HOGENOM" id="CLU_969170_0_0_14"/>
<dbReference type="InParanoid" id="P47562"/>
<dbReference type="OrthoDB" id="9945800at2"/>
<dbReference type="BioCyc" id="MGEN243273:G1GJ2-389-MONOMER"/>
<dbReference type="Proteomes" id="UP000000807">
    <property type="component" value="Chromosome"/>
</dbReference>
<dbReference type="GO" id="GO:0005886">
    <property type="term" value="C:plasma membrane"/>
    <property type="evidence" value="ECO:0007669"/>
    <property type="project" value="UniProtKB-SubCell"/>
</dbReference>
<accession>P47562</accession>
<accession>Q49508</accession>
<keyword id="KW-1003">Cell membrane</keyword>
<keyword id="KW-0472">Membrane</keyword>
<keyword id="KW-1185">Reference proteome</keyword>
<keyword id="KW-0812">Transmembrane</keyword>
<keyword id="KW-1133">Transmembrane helix</keyword>
<sequence>MINSTKGYIDQNGLAAKQFVQTKQLSVIRLTFMVAAFGIFFIFLVALTVQQLLSRSTLIDLASDFRTLSTIAVITSFVSLILYFVTAFKLRNPNTSLTWFWALIITDVISYGITLGILLTLATTFSKQVNFEANDIVYAFLGASLVFGSVWGLSALPSQKRRYQQTQTLFHILLWAFVISIVASLLSFILNFTVFASTTNLLDRIIPGLSLIVGGIFSLISVYFVSLQIRNEQDLIKYYESEDYEMARRQSWRSALFFGAWLISSFMNLVYFILRIILITKNFSRV</sequence>
<evidence type="ECO:0000255" key="1"/>
<evidence type="ECO:0000305" key="2"/>
<organism>
    <name type="scientific">Mycoplasma genitalium (strain ATCC 33530 / DSM 19775 / NCTC 10195 / G37)</name>
    <name type="common">Mycoplasmoides genitalium</name>
    <dbReference type="NCBI Taxonomy" id="243273"/>
    <lineage>
        <taxon>Bacteria</taxon>
        <taxon>Bacillati</taxon>
        <taxon>Mycoplasmatota</taxon>
        <taxon>Mycoplasmoidales</taxon>
        <taxon>Mycoplasmoidaceae</taxon>
        <taxon>Mycoplasmoides</taxon>
    </lineage>
</organism>
<feature type="chain" id="PRO_0000210536" description="Uncharacterized protein MG320">
    <location>
        <begin position="1"/>
        <end position="286"/>
    </location>
</feature>
<feature type="transmembrane region" description="Helical" evidence="1">
    <location>
        <begin position="30"/>
        <end position="50"/>
    </location>
</feature>
<feature type="transmembrane region" description="Helical" evidence="1">
    <location>
        <begin position="68"/>
        <end position="88"/>
    </location>
</feature>
<feature type="transmembrane region" description="Helical" evidence="1">
    <location>
        <begin position="99"/>
        <end position="119"/>
    </location>
</feature>
<feature type="transmembrane region" description="Helical" evidence="1">
    <location>
        <begin position="136"/>
        <end position="156"/>
    </location>
</feature>
<feature type="transmembrane region" description="Helical" evidence="1">
    <location>
        <begin position="169"/>
        <end position="189"/>
    </location>
</feature>
<feature type="transmembrane region" description="Helical" evidence="1">
    <location>
        <begin position="205"/>
        <end position="225"/>
    </location>
</feature>
<feature type="transmembrane region" description="Helical" evidence="1">
    <location>
        <begin position="254"/>
        <end position="274"/>
    </location>
</feature>
<feature type="sequence conflict" description="In Ref. 2; AAB01012." evidence="2" ref="2">
    <original>L</original>
    <variation>H</variation>
    <location>
        <position position="156"/>
    </location>
</feature>
<feature type="sequence conflict" description="In Ref. 2." evidence="2" ref="2">
    <original>FGA</original>
    <variation>LGL</variation>
    <location>
        <begin position="258"/>
        <end position="260"/>
    </location>
</feature>